<reference key="1">
    <citation type="journal article" date="2005" name="Proc. Natl. Acad. Sci. U.S.A.">
        <title>Complete genome sequencing of Anaplasma marginale reveals that the surface is skewed to two superfamilies of outer membrane proteins.</title>
        <authorList>
            <person name="Brayton K.A."/>
            <person name="Kappmeyer L.S."/>
            <person name="Herndon D.R."/>
            <person name="Dark M.J."/>
            <person name="Tibbals D.L."/>
            <person name="Palmer G.H."/>
            <person name="McGuire T.C."/>
            <person name="Knowles D.P. Jr."/>
        </authorList>
    </citation>
    <scope>NUCLEOTIDE SEQUENCE [LARGE SCALE GENOMIC DNA]</scope>
    <source>
        <strain>St. Maries</strain>
    </source>
</reference>
<comment type="function">
    <text evidence="1">Can catalyze the hydrolysis of ATP in the presence of single-stranded DNA, the ATP-dependent uptake of single-stranded DNA by duplex DNA, and the ATP-dependent hybridization of homologous single-stranded DNAs. It interacts with LexA causing its activation and leading to its autocatalytic cleavage.</text>
</comment>
<comment type="subcellular location">
    <subcellularLocation>
        <location evidence="1">Cytoplasm</location>
    </subcellularLocation>
</comment>
<comment type="similarity">
    <text evidence="1">Belongs to the RecA family.</text>
</comment>
<feature type="chain" id="PRO_0000122639" description="Protein RecA">
    <location>
        <begin position="1"/>
        <end position="359"/>
    </location>
</feature>
<feature type="binding site" evidence="1">
    <location>
        <begin position="74"/>
        <end position="81"/>
    </location>
    <ligand>
        <name>ATP</name>
        <dbReference type="ChEBI" id="CHEBI:30616"/>
    </ligand>
</feature>
<sequence length="359" mass="38669">MSMSGSKKDVESEKQKALDAAISQIERAFGRGAIMKLKQHPAEKMDSVSTGSIALDAALGIGGLPKGRIVEIFGPESSGKTTLALHVIAEAQKQGGNCAFIDAEHALDTVYARKLGVNVGDLIVSQPDTGEQALHIVEYLVCSGAIDVIVVDSVAALTPRAEIEGDMGDQHMGLQARLLSHALRKLTSVVSKANCILVFINQIRIKIGVIYGNPEVTTGGSALKFYTSIRLDIRKVSAIKDKDNVIGNQTRVKVVKNKVAPPFKQAEFDIVYNEGISKLGEIVDMGVKFGFVEKSGAHYSYGAVKLGQGRENAKGYLKSNPDVANELEQKIRACLAESMHNSDLFAVDERTDVLEEEVF</sequence>
<gene>
    <name evidence="1" type="primary">recA</name>
    <name type="ordered locus">AM085</name>
</gene>
<name>RECA_ANAMM</name>
<accession>Q5PBT6</accession>
<keyword id="KW-0067">ATP-binding</keyword>
<keyword id="KW-0963">Cytoplasm</keyword>
<keyword id="KW-0227">DNA damage</keyword>
<keyword id="KW-0233">DNA recombination</keyword>
<keyword id="KW-0234">DNA repair</keyword>
<keyword id="KW-0238">DNA-binding</keyword>
<keyword id="KW-0547">Nucleotide-binding</keyword>
<keyword id="KW-0742">SOS response</keyword>
<protein>
    <recommendedName>
        <fullName evidence="1">Protein RecA</fullName>
    </recommendedName>
    <alternativeName>
        <fullName evidence="1">Recombinase A</fullName>
    </alternativeName>
</protein>
<dbReference type="EMBL" id="CP000030">
    <property type="protein sequence ID" value="AAV86243.1"/>
    <property type="molecule type" value="Genomic_DNA"/>
</dbReference>
<dbReference type="SMR" id="Q5PBT6"/>
<dbReference type="KEGG" id="ama:AM085"/>
<dbReference type="HOGENOM" id="CLU_040469_3_2_5"/>
<dbReference type="GO" id="GO:0005829">
    <property type="term" value="C:cytosol"/>
    <property type="evidence" value="ECO:0007669"/>
    <property type="project" value="TreeGrafter"/>
</dbReference>
<dbReference type="GO" id="GO:0005524">
    <property type="term" value="F:ATP binding"/>
    <property type="evidence" value="ECO:0007669"/>
    <property type="project" value="UniProtKB-UniRule"/>
</dbReference>
<dbReference type="GO" id="GO:0016887">
    <property type="term" value="F:ATP hydrolysis activity"/>
    <property type="evidence" value="ECO:0007669"/>
    <property type="project" value="InterPro"/>
</dbReference>
<dbReference type="GO" id="GO:0140664">
    <property type="term" value="F:ATP-dependent DNA damage sensor activity"/>
    <property type="evidence" value="ECO:0007669"/>
    <property type="project" value="InterPro"/>
</dbReference>
<dbReference type="GO" id="GO:0003684">
    <property type="term" value="F:damaged DNA binding"/>
    <property type="evidence" value="ECO:0007669"/>
    <property type="project" value="UniProtKB-UniRule"/>
</dbReference>
<dbReference type="GO" id="GO:0003697">
    <property type="term" value="F:single-stranded DNA binding"/>
    <property type="evidence" value="ECO:0007669"/>
    <property type="project" value="UniProtKB-UniRule"/>
</dbReference>
<dbReference type="GO" id="GO:0006310">
    <property type="term" value="P:DNA recombination"/>
    <property type="evidence" value="ECO:0007669"/>
    <property type="project" value="UniProtKB-UniRule"/>
</dbReference>
<dbReference type="GO" id="GO:0006281">
    <property type="term" value="P:DNA repair"/>
    <property type="evidence" value="ECO:0007669"/>
    <property type="project" value="UniProtKB-UniRule"/>
</dbReference>
<dbReference type="GO" id="GO:0009432">
    <property type="term" value="P:SOS response"/>
    <property type="evidence" value="ECO:0007669"/>
    <property type="project" value="UniProtKB-UniRule"/>
</dbReference>
<dbReference type="CDD" id="cd00983">
    <property type="entry name" value="RecA"/>
    <property type="match status" value="1"/>
</dbReference>
<dbReference type="FunFam" id="3.40.50.300:FF:000087">
    <property type="entry name" value="Recombinase RecA"/>
    <property type="match status" value="1"/>
</dbReference>
<dbReference type="Gene3D" id="3.40.50.300">
    <property type="entry name" value="P-loop containing nucleotide triphosphate hydrolases"/>
    <property type="match status" value="1"/>
</dbReference>
<dbReference type="HAMAP" id="MF_00268">
    <property type="entry name" value="RecA"/>
    <property type="match status" value="1"/>
</dbReference>
<dbReference type="InterPro" id="IPR003593">
    <property type="entry name" value="AAA+_ATPase"/>
</dbReference>
<dbReference type="InterPro" id="IPR013765">
    <property type="entry name" value="DNA_recomb/repair_RecA"/>
</dbReference>
<dbReference type="InterPro" id="IPR020584">
    <property type="entry name" value="DNA_recomb/repair_RecA_CS"/>
</dbReference>
<dbReference type="InterPro" id="IPR027417">
    <property type="entry name" value="P-loop_NTPase"/>
</dbReference>
<dbReference type="InterPro" id="IPR049261">
    <property type="entry name" value="RecA-like_C"/>
</dbReference>
<dbReference type="InterPro" id="IPR049428">
    <property type="entry name" value="RecA-like_N"/>
</dbReference>
<dbReference type="InterPro" id="IPR020588">
    <property type="entry name" value="RecA_ATP-bd"/>
</dbReference>
<dbReference type="InterPro" id="IPR023400">
    <property type="entry name" value="RecA_C_sf"/>
</dbReference>
<dbReference type="InterPro" id="IPR020587">
    <property type="entry name" value="RecA_monomer-monomer_interface"/>
</dbReference>
<dbReference type="NCBIfam" id="TIGR02012">
    <property type="entry name" value="tigrfam_recA"/>
    <property type="match status" value="1"/>
</dbReference>
<dbReference type="PANTHER" id="PTHR45900:SF1">
    <property type="entry name" value="MITOCHONDRIAL DNA REPAIR PROTEIN RECA HOMOLOG-RELATED"/>
    <property type="match status" value="1"/>
</dbReference>
<dbReference type="PANTHER" id="PTHR45900">
    <property type="entry name" value="RECA"/>
    <property type="match status" value="1"/>
</dbReference>
<dbReference type="Pfam" id="PF00154">
    <property type="entry name" value="RecA"/>
    <property type="match status" value="1"/>
</dbReference>
<dbReference type="Pfam" id="PF21096">
    <property type="entry name" value="RecA_C"/>
    <property type="match status" value="1"/>
</dbReference>
<dbReference type="PRINTS" id="PR00142">
    <property type="entry name" value="RECA"/>
</dbReference>
<dbReference type="SMART" id="SM00382">
    <property type="entry name" value="AAA"/>
    <property type="match status" value="1"/>
</dbReference>
<dbReference type="SUPFAM" id="SSF52540">
    <property type="entry name" value="P-loop containing nucleoside triphosphate hydrolases"/>
    <property type="match status" value="1"/>
</dbReference>
<dbReference type="SUPFAM" id="SSF54752">
    <property type="entry name" value="RecA protein, C-terminal domain"/>
    <property type="match status" value="1"/>
</dbReference>
<dbReference type="PROSITE" id="PS00321">
    <property type="entry name" value="RECA_1"/>
    <property type="match status" value="1"/>
</dbReference>
<dbReference type="PROSITE" id="PS50162">
    <property type="entry name" value="RECA_2"/>
    <property type="match status" value="1"/>
</dbReference>
<dbReference type="PROSITE" id="PS50163">
    <property type="entry name" value="RECA_3"/>
    <property type="match status" value="1"/>
</dbReference>
<evidence type="ECO:0000255" key="1">
    <source>
        <dbReference type="HAMAP-Rule" id="MF_00268"/>
    </source>
</evidence>
<proteinExistence type="inferred from homology"/>
<organism>
    <name type="scientific">Anaplasma marginale (strain St. Maries)</name>
    <dbReference type="NCBI Taxonomy" id="234826"/>
    <lineage>
        <taxon>Bacteria</taxon>
        <taxon>Pseudomonadati</taxon>
        <taxon>Pseudomonadota</taxon>
        <taxon>Alphaproteobacteria</taxon>
        <taxon>Rickettsiales</taxon>
        <taxon>Anaplasmataceae</taxon>
        <taxon>Anaplasma</taxon>
    </lineage>
</organism>